<name>HCST_PIG</name>
<accession>Q9GJR5</accession>
<gene>
    <name type="primary">HCST</name>
    <name type="synonym">DAP10</name>
</gene>
<organism>
    <name type="scientific">Sus scrofa</name>
    <name type="common">Pig</name>
    <dbReference type="NCBI Taxonomy" id="9823"/>
    <lineage>
        <taxon>Eukaryota</taxon>
        <taxon>Metazoa</taxon>
        <taxon>Chordata</taxon>
        <taxon>Craniata</taxon>
        <taxon>Vertebrata</taxon>
        <taxon>Euteleostomi</taxon>
        <taxon>Mammalia</taxon>
        <taxon>Eutheria</taxon>
        <taxon>Laurasiatheria</taxon>
        <taxon>Artiodactyla</taxon>
        <taxon>Suina</taxon>
        <taxon>Suidae</taxon>
        <taxon>Sus</taxon>
    </lineage>
</organism>
<dbReference type="EMBL" id="AF285444">
    <property type="protein sequence ID" value="AAG29422.1"/>
    <property type="molecule type" value="mRNA"/>
</dbReference>
<dbReference type="EMBL" id="AF285445">
    <property type="protein sequence ID" value="AAG29423.1"/>
    <property type="molecule type" value="mRNA"/>
</dbReference>
<dbReference type="EMBL" id="AF285446">
    <property type="protein sequence ID" value="AAG29424.1"/>
    <property type="molecule type" value="Genomic_DNA"/>
</dbReference>
<dbReference type="RefSeq" id="NP_999307.1">
    <property type="nucleotide sequence ID" value="NM_214142.1"/>
</dbReference>
<dbReference type="RefSeq" id="XP_013853785.1">
    <property type="nucleotide sequence ID" value="XM_013998331.2"/>
</dbReference>
<dbReference type="RefSeq" id="XP_013853786.1">
    <property type="nucleotide sequence ID" value="XM_013998332.2"/>
</dbReference>
<dbReference type="SMR" id="Q9GJR5"/>
<dbReference type="FunCoup" id="Q9GJR5">
    <property type="interactions" value="173"/>
</dbReference>
<dbReference type="STRING" id="9823.ENSSSCP00000052528"/>
<dbReference type="PaxDb" id="9823-ENSSSCP00000003142"/>
<dbReference type="Ensembl" id="ENSSSCT00025079987.1">
    <property type="protein sequence ID" value="ENSSSCP00025034743.1"/>
    <property type="gene ID" value="ENSSSCG00025058221.1"/>
</dbReference>
<dbReference type="Ensembl" id="ENSSSCT00030034253.1">
    <property type="protein sequence ID" value="ENSSSCP00030015549.1"/>
    <property type="gene ID" value="ENSSSCG00030024544.1"/>
</dbReference>
<dbReference type="Ensembl" id="ENSSSCT00035040774.1">
    <property type="protein sequence ID" value="ENSSSCP00035016304.1"/>
    <property type="gene ID" value="ENSSSCG00035030785.1"/>
</dbReference>
<dbReference type="Ensembl" id="ENSSSCT00040101845.1">
    <property type="protein sequence ID" value="ENSSSCP00040045916.1"/>
    <property type="gene ID" value="ENSSSCG00040073695.1"/>
</dbReference>
<dbReference type="Ensembl" id="ENSSSCT00050028770.1">
    <property type="protein sequence ID" value="ENSSSCP00050011918.1"/>
    <property type="gene ID" value="ENSSSCG00050021295.1"/>
</dbReference>
<dbReference type="Ensembl" id="ENSSSCT00065091308.1">
    <property type="protein sequence ID" value="ENSSSCP00065039988.1"/>
    <property type="gene ID" value="ENSSSCG00065066493.1"/>
</dbReference>
<dbReference type="GeneID" id="397267"/>
<dbReference type="KEGG" id="ssc:397267"/>
<dbReference type="CTD" id="10870"/>
<dbReference type="eggNOG" id="ENOG502TKP3">
    <property type="taxonomic scope" value="Eukaryota"/>
</dbReference>
<dbReference type="HOGENOM" id="CLU_196934_0_0_1"/>
<dbReference type="InParanoid" id="Q9GJR5"/>
<dbReference type="OMA" id="AQMTPGE"/>
<dbReference type="OrthoDB" id="8670797at2759"/>
<dbReference type="TreeFam" id="TF338335"/>
<dbReference type="Reactome" id="R-SSC-198933">
    <property type="pathway name" value="Immunoregulatory interactions between a Lymphoid and a non-Lymphoid cell"/>
</dbReference>
<dbReference type="Proteomes" id="UP000008227">
    <property type="component" value="Unplaced"/>
</dbReference>
<dbReference type="Proteomes" id="UP000314985">
    <property type="component" value="Unplaced"/>
</dbReference>
<dbReference type="Proteomes" id="UP000694570">
    <property type="component" value="Unplaced"/>
</dbReference>
<dbReference type="Proteomes" id="UP000694571">
    <property type="component" value="Unplaced"/>
</dbReference>
<dbReference type="Proteomes" id="UP000694720">
    <property type="component" value="Unplaced"/>
</dbReference>
<dbReference type="Proteomes" id="UP000694722">
    <property type="component" value="Unplaced"/>
</dbReference>
<dbReference type="Proteomes" id="UP000694723">
    <property type="component" value="Unplaced"/>
</dbReference>
<dbReference type="Proteomes" id="UP000694724">
    <property type="component" value="Unplaced"/>
</dbReference>
<dbReference type="Proteomes" id="UP000694725">
    <property type="component" value="Unplaced"/>
</dbReference>
<dbReference type="Proteomes" id="UP000694726">
    <property type="component" value="Unplaced"/>
</dbReference>
<dbReference type="Proteomes" id="UP000694727">
    <property type="component" value="Unplaced"/>
</dbReference>
<dbReference type="Proteomes" id="UP000694728">
    <property type="component" value="Unplaced"/>
</dbReference>
<dbReference type="GO" id="GO:0009986">
    <property type="term" value="C:cell surface"/>
    <property type="evidence" value="ECO:0000250"/>
    <property type="project" value="UniProtKB"/>
</dbReference>
<dbReference type="GO" id="GO:0016020">
    <property type="term" value="C:membrane"/>
    <property type="evidence" value="ECO:0007669"/>
    <property type="project" value="UniProtKB-SubCell"/>
</dbReference>
<dbReference type="GO" id="GO:0043548">
    <property type="term" value="F:phosphatidylinositol 3-kinase binding"/>
    <property type="evidence" value="ECO:0000318"/>
    <property type="project" value="GO_Central"/>
</dbReference>
<dbReference type="GO" id="GO:0005102">
    <property type="term" value="F:signaling receptor binding"/>
    <property type="evidence" value="ECO:0000318"/>
    <property type="project" value="GO_Central"/>
</dbReference>
<dbReference type="GO" id="GO:0051897">
    <property type="term" value="P:positive regulation of phosphatidylinositol 3-kinase/protein kinase B signal transduction"/>
    <property type="evidence" value="ECO:0000318"/>
    <property type="project" value="GO_Central"/>
</dbReference>
<dbReference type="GO" id="GO:0050776">
    <property type="term" value="P:regulation of immune response"/>
    <property type="evidence" value="ECO:0007669"/>
    <property type="project" value="InterPro"/>
</dbReference>
<dbReference type="InterPro" id="IPR009861">
    <property type="entry name" value="HCST"/>
</dbReference>
<dbReference type="PANTHER" id="PTHR21409">
    <property type="entry name" value="HEMATOPOIETIC CELL SIGNAL TRANSDUCER"/>
    <property type="match status" value="1"/>
</dbReference>
<dbReference type="PANTHER" id="PTHR21409:SF1">
    <property type="entry name" value="HEMATOPOIETIC CELL SIGNAL TRANSDUCER"/>
    <property type="match status" value="1"/>
</dbReference>
<dbReference type="Pfam" id="PF07213">
    <property type="entry name" value="DAP10"/>
    <property type="match status" value="1"/>
</dbReference>
<feature type="signal peptide" evidence="3">
    <location>
        <begin position="1"/>
        <end position="18"/>
    </location>
</feature>
<feature type="chain" id="PRO_0000330292" description="Hematopoietic cell signal transducer">
    <location>
        <begin position="19"/>
        <end position="79"/>
    </location>
</feature>
<feature type="topological domain" description="Extracellular" evidence="3">
    <location>
        <begin position="19"/>
        <end position="35"/>
    </location>
</feature>
<feature type="transmembrane region" description="Helical" evidence="3">
    <location>
        <begin position="36"/>
        <end position="56"/>
    </location>
</feature>
<feature type="topological domain" description="Cytoplasmic" evidence="3">
    <location>
        <begin position="57"/>
        <end position="79"/>
    </location>
</feature>
<feature type="region of interest" description="PIK3R1 binding site">
    <location>
        <begin position="72"/>
        <end position="75"/>
    </location>
</feature>
<feature type="region of interest" description="GRB2 binding site" evidence="1">
    <location>
        <begin position="72"/>
        <end position="74"/>
    </location>
</feature>
<feature type="modified residue" description="Phosphotyrosine" evidence="2">
    <location>
        <position position="72"/>
    </location>
</feature>
<comment type="function">
    <text evidence="1">Transmembrane adapter protein which associates with KLRK1 to form an activation receptor KLRK1-HCST in lymphoid and myeloid cells; this receptor plays a major role in triggering cytotoxicity against target cells expressing cell surface ligands such as MHC class I chain-related MICA and MICB, and UL16-binding proteins (ULBPs); these ligands are up-regulated by stress conditions and pathological state such as viral infection and tumor transformation. Functions as a docking site for PI3-kinase PIK3R1 and GRB2. Interaction of ULBPs with KLRK1-HCST triggers calcium mobilization and activation of the PIK3R1, MAP2K/ERK, and JAK2/STAT5 signaling pathways. Both PIK3R1 and GRB2 are required for full KLRK1-HCST-mediated activation and ultimate killing of target cells. In NK cells, KLRK1-HCST signaling directly induces cytotoxicity and enhances cytokine production initiated via DAP12/TYROBP-associated receptors. In T-cells, it provides primarily costimulation for TCR-induced signals. KLRK1-HCST receptor plays a role in immune surveillance against tumors and is required for cytolysis of tumors cells; indeed, melanoma cells that do not express KLRK1 ligands escape from immune surveillance mediated by NK cells (By similarity).</text>
</comment>
<comment type="subunit">
    <text evidence="1 2 4">Homodimer; Disulfide-linked. Heterohexamer composed of four subunits of HCST/DAP10 and two subunits of KLRK1. Interacts (via transmembrane domain) with KLRK1 (via transmembrane domain); the interaction is required for KLRK1 NK cell surface and induces NK cell-mediated cytotoxicity. Interacts with PIK3R1 and GRB2. Interacts with CLEC5A. Forms an CLEC5A/TYROBP/HCST trimolecular complex depending almost solely on TYROBP (By similarity). Interacts with KLRK1. Interacts with CD300H (By similarity).</text>
</comment>
<comment type="subcellular location">
    <subcellularLocation>
        <location evidence="5">Membrane</location>
        <topology evidence="5">Single-pass type I membrane protein</topology>
    </subcellularLocation>
</comment>
<comment type="tissue specificity">
    <text>Expressed predominantly in lymphohematopoietic tissues.</text>
</comment>
<comment type="PTM">
    <text evidence="1">Phosphorylated; PIK3R1 and GRB2 associate specifically with tyrosine-phosphorylated HCST.</text>
</comment>
<comment type="PTM">
    <text evidence="1">O-glycosylated.</text>
</comment>
<comment type="similarity">
    <text evidence="5">Belongs to the DAP10 family.</text>
</comment>
<reference key="1">
    <citation type="journal article" date="2001" name="Immunogenetics">
        <title>Molecular cloning and characterization of pig immunoreceptor DAP10 and NKG2D.</title>
        <authorList>
            <person name="Yim D."/>
            <person name="Jie H.-B."/>
            <person name="Sotiriadis J."/>
            <person name="Kim Y.-S."/>
            <person name="Kim K.-S."/>
            <person name="Rothschild M.F."/>
            <person name="Lanier L.L."/>
            <person name="Kim Y.B."/>
        </authorList>
    </citation>
    <scope>NUCLEOTIDE SEQUENCE [MRNA]</scope>
    <scope>INTERACTION WITH KLRK1</scope>
</reference>
<keyword id="KW-1015">Disulfide bond</keyword>
<keyword id="KW-0325">Glycoprotein</keyword>
<keyword id="KW-0472">Membrane</keyword>
<keyword id="KW-0597">Phosphoprotein</keyword>
<keyword id="KW-1185">Reference proteome</keyword>
<keyword id="KW-0732">Signal</keyword>
<keyword id="KW-0812">Transmembrane</keyword>
<keyword id="KW-1133">Transmembrane helix</keyword>
<proteinExistence type="evidence at protein level"/>
<protein>
    <recommendedName>
        <fullName>Hematopoietic cell signal transducer</fullName>
    </recommendedName>
    <alternativeName>
        <fullName>DNAX-activation protein 10</fullName>
    </alternativeName>
    <alternativeName>
        <fullName>Membrane protein DAP10</fullName>
    </alternativeName>
</protein>
<evidence type="ECO:0000250" key="1"/>
<evidence type="ECO:0000250" key="2">
    <source>
        <dbReference type="UniProtKB" id="Q9UBK5"/>
    </source>
</evidence>
<evidence type="ECO:0000255" key="3"/>
<evidence type="ECO:0000269" key="4">
    <source>
    </source>
</evidence>
<evidence type="ECO:0000305" key="5"/>
<sequence length="79" mass="7930">MAPPGGILFLLLLPVAAAQVTSGSCSGCGPLSLPLLAGLVAADAVVSLLIVVGVFVCGRPRSRPTQEDGKIYINMPGRG</sequence>